<keyword id="KW-0025">Alternative splicing</keyword>
<keyword id="KW-1003">Cell membrane</keyword>
<keyword id="KW-0175">Coiled coil</keyword>
<keyword id="KW-0963">Cytoplasm</keyword>
<keyword id="KW-0206">Cytoskeleton</keyword>
<keyword id="KW-0903">Direct protein sequencing</keyword>
<keyword id="KW-0256">Endoplasmic reticulum</keyword>
<keyword id="KW-0472">Membrane</keyword>
<keyword id="KW-0496">Mitochondrion</keyword>
<keyword id="KW-0597">Phosphoprotein</keyword>
<keyword id="KW-1185">Reference proteome</keyword>
<keyword id="KW-0812">Transmembrane</keyword>
<keyword id="KW-1133">Transmembrane helix</keyword>
<protein>
    <recommendedName>
        <fullName>Sarcolemmal membrane-associated protein</fullName>
        <shortName>Sarcolemmal-associated protein</shortName>
    </recommendedName>
</protein>
<evidence type="ECO:0000250" key="1">
    <source>
        <dbReference type="UniProtKB" id="P0C219"/>
    </source>
</evidence>
<evidence type="ECO:0000250" key="2">
    <source>
        <dbReference type="UniProtKB" id="Q14BN4"/>
    </source>
</evidence>
<evidence type="ECO:0000255" key="3"/>
<evidence type="ECO:0000255" key="4">
    <source>
        <dbReference type="PROSITE-ProRule" id="PRU00086"/>
    </source>
</evidence>
<evidence type="ECO:0000256" key="5">
    <source>
        <dbReference type="SAM" id="MobiDB-lite"/>
    </source>
</evidence>
<evidence type="ECO:0000269" key="6">
    <source>
    </source>
</evidence>
<evidence type="ECO:0000269" key="7">
    <source>
    </source>
</evidence>
<evidence type="ECO:0000269" key="8">
    <source>
    </source>
</evidence>
<evidence type="ECO:0000269" key="9">
    <source>
    </source>
</evidence>
<evidence type="ECO:0000303" key="10">
    <source>
    </source>
</evidence>
<evidence type="ECO:0000303" key="11">
    <source>
    </source>
</evidence>
<evidence type="ECO:0000303" key="12">
    <source>
    </source>
</evidence>
<evidence type="ECO:0000303" key="13">
    <source>
    </source>
</evidence>
<evidence type="ECO:0000305" key="14"/>
<organism>
    <name type="scientific">Mus musculus</name>
    <name type="common">Mouse</name>
    <dbReference type="NCBI Taxonomy" id="10090"/>
    <lineage>
        <taxon>Eukaryota</taxon>
        <taxon>Metazoa</taxon>
        <taxon>Chordata</taxon>
        <taxon>Craniata</taxon>
        <taxon>Vertebrata</taxon>
        <taxon>Euteleostomi</taxon>
        <taxon>Mammalia</taxon>
        <taxon>Eutheria</taxon>
        <taxon>Euarchontoglires</taxon>
        <taxon>Glires</taxon>
        <taxon>Rodentia</taxon>
        <taxon>Myomorpha</taxon>
        <taxon>Muroidea</taxon>
        <taxon>Muridae</taxon>
        <taxon>Murinae</taxon>
        <taxon>Mus</taxon>
        <taxon>Mus</taxon>
    </lineage>
</organism>
<feature type="chain" id="PRO_0000259663" description="Sarcolemmal membrane-associated protein">
    <location>
        <begin position="1"/>
        <end position="845"/>
    </location>
</feature>
<feature type="topological domain" description="Cytoplasmic" evidence="3">
    <location>
        <begin position="1"/>
        <end position="819"/>
    </location>
</feature>
<feature type="transmembrane region" description="Helical; Anchor for type IV membrane protein" evidence="3">
    <location>
        <begin position="820"/>
        <end position="840"/>
    </location>
</feature>
<feature type="topological domain" description="Extracellular" evidence="3">
    <location>
        <begin position="841"/>
        <end position="845"/>
    </location>
</feature>
<feature type="domain" description="FHA" evidence="4">
    <location>
        <begin position="28"/>
        <end position="85"/>
    </location>
</feature>
<feature type="region of interest" description="Necessary for targeting to centrosomes">
    <location>
        <begin position="1"/>
        <end position="163"/>
    </location>
</feature>
<feature type="region of interest" description="Disordered" evidence="5">
    <location>
        <begin position="451"/>
        <end position="484"/>
    </location>
</feature>
<feature type="coiled-coil region" evidence="3">
    <location>
        <begin position="167"/>
        <end position="202"/>
    </location>
</feature>
<feature type="coiled-coil region" evidence="3">
    <location>
        <begin position="231"/>
        <end position="388"/>
    </location>
</feature>
<feature type="coiled-coil region" evidence="3">
    <location>
        <begin position="506"/>
        <end position="816"/>
    </location>
</feature>
<feature type="compositionally biased region" description="Basic and acidic residues" evidence="5">
    <location>
        <begin position="451"/>
        <end position="463"/>
    </location>
</feature>
<feature type="modified residue" description="Phosphoserine" evidence="2">
    <location>
        <position position="148"/>
    </location>
</feature>
<feature type="modified residue" description="Phosphoserine" evidence="1">
    <location>
        <position position="465"/>
    </location>
</feature>
<feature type="modified residue" description="Phosphoserine" evidence="2">
    <location>
        <position position="469"/>
    </location>
</feature>
<feature type="splice variant" id="VSP_021514" description="In isoform 3 and isoform 4." evidence="10 13">
    <location>
        <begin position="1"/>
        <end position="483"/>
    </location>
</feature>
<feature type="splice variant" id="VSP_021515" description="In isoform 5." evidence="12">
    <location>
        <begin position="1"/>
        <end position="348"/>
    </location>
</feature>
<feature type="splice variant" id="VSP_021516" description="In isoform 5." evidence="12">
    <original>GIQVDDFLPKINGSTEKEHLLSKSGGDCTFIHQFLECQK</original>
    <variation>E</variation>
    <location>
        <begin position="396"/>
        <end position="434"/>
    </location>
</feature>
<feature type="splice variant" id="VSP_021517" description="In isoform 2." evidence="11">
    <location>
        <begin position="414"/>
        <end position="434"/>
    </location>
</feature>
<feature type="splice variant" id="VSP_021518" description="In isoform 2 and isoform 4." evidence="10 11">
    <original>KPWPWMPMLAALVAVTAMVLYVPGLARASP</original>
    <variation>PSILQPVPAVFIGLFLAFLFWCFGPLW</variation>
    <location>
        <begin position="816"/>
        <end position="845"/>
    </location>
</feature>
<feature type="sequence conflict" description="In Ref. 1; AAG41950." evidence="14" ref="1">
    <original>E</original>
    <variation>G</variation>
    <location>
        <position position="682"/>
    </location>
</feature>
<feature type="sequence conflict" description="In Ref. 1; AAG41950." evidence="14" ref="1">
    <original>EN</original>
    <variation>GD</variation>
    <location>
        <begin position="696"/>
        <end position="697"/>
    </location>
</feature>
<feature type="transmembrane region" description="Helical; Anchor for type IV membrane protein" evidence="3">
    <location sequence="Q3URD3-2">
        <begin position="28"/>
        <end position="85"/>
    </location>
</feature>
<feature type="transmembrane region" description="Helical; Anchor for type IV membrane protein" evidence="3">
    <location sequence="Q3URD3-4">
        <begin position="339"/>
        <end position="359"/>
    </location>
</feature>
<comment type="function">
    <text evidence="2 9">Associates with the striatin-interacting phosphatase and kinase (STRIPAK) core complex, forming the extended (SIKE1:SLMAP)STRIPAK complex. The (SIKE1:SLMAP)STRIPAK complex dephosphorylates STK3 leading to the inhibition of Hippo signaling and the control of cell growth (By similarity). May play a role during myoblast fusion (PubMed:15591093).</text>
</comment>
<comment type="subunit">
    <text evidence="2 9">Homodimer. Interacts with myosin (PubMed:15591093). Interacts with SIKE1 and both associate with the STRIPAK core complex composed of PP2A catalytic and scaffolding subunits, the striatins (PP2A regulatory subunits), the striatin-associated proteins MOB4, STRIP1 and STRIP2, PDCD10 and members of the STE20 kinases, such as STK24 and STK26. Interacts (via FHA domain) with STK3 (when phosphorylated); the interaction associates STK3 with the STRIPAK complex (By similarity).</text>
</comment>
<comment type="interaction">
    <interactant intactId="EBI-3294998">
        <id>Q3URD3-4</id>
    </interactant>
    <interactant intactId="EBI-643162">
        <id>Q8BH43</id>
        <label>Wasf2</label>
    </interactant>
    <organismsDiffer>false</organismsDiffer>
    <experiments>3</experiments>
</comment>
<comment type="subcellular location">
    <subcellularLocation>
        <location evidence="7 9">Cell membrane</location>
        <location evidence="7 9">Sarcolemma</location>
        <topology evidence="7 9">Single-pass type IV membrane protein</topology>
    </subcellularLocation>
    <subcellularLocation>
        <location evidence="7">Cytoplasm</location>
        <location evidence="7">Myofibril</location>
        <location evidence="7">Sarcomere</location>
        <location evidence="7">M line</location>
    </subcellularLocation>
    <subcellularLocation>
        <location evidence="7">Cytoplasm</location>
        <location evidence="7">Myofibril</location>
        <location evidence="7">Sarcomere</location>
        <location evidence="7">Z line</location>
    </subcellularLocation>
    <text evidence="7">Membrane-associated. Distributed in the transverse tubules and near the junctional sarcoplasmic reticulum. Detected along the Z- and M-lines in cardiomyocytes.</text>
</comment>
<comment type="subcellular location">
    <molecule>Isoform 1</molecule>
    <subcellularLocation>
        <location evidence="8">Cytoplasm</location>
        <location evidence="8">Cytoskeleton</location>
        <location evidence="8">Microtubule organizing center</location>
        <location evidence="8">Centrosome</location>
    </subcellularLocation>
    <subcellularLocation>
        <location evidence="2">Endoplasmic reticulum membrane</location>
        <topology evidence="2">Single-pass type IV membrane protein</topology>
    </subcellularLocation>
    <subcellularLocation>
        <location evidence="2">Mitochondrion membrane</location>
        <topology evidence="2">Single-pass type IV membrane protein</topology>
    </subcellularLocation>
    <text evidence="8">Localizes to the centrosomes in a microtubule-dependent manner.</text>
</comment>
<comment type="subcellular location">
    <molecule>Isoform 2</molecule>
    <subcellularLocation>
        <location evidence="8">Cytoplasm</location>
        <location evidence="8">Cytoskeleton</location>
        <location evidence="8">Microtubule organizing center</location>
        <location evidence="8">Centrosome</location>
    </subcellularLocation>
    <subcellularLocation>
        <location evidence="2">Endoplasmic reticulum membrane</location>
        <topology evidence="2">Single-pass type IV membrane protein</topology>
    </subcellularLocation>
    <text evidence="2 8">Localizes to the centrosomes in a microtubule-dependent manner (PubMed:15126628). Do not localize at the mitochondrial membrane (By similarity).</text>
</comment>
<comment type="subcellular location">
    <molecule>Isoform 3</molecule>
    <subcellularLocation>
        <location evidence="2">Endoplasmic reticulum membrane</location>
        <topology evidence="2">Single-pass type IV membrane protein</topology>
    </subcellularLocation>
    <subcellularLocation>
        <location evidence="2">Mitochondrion membrane</location>
        <topology evidence="2">Single-pass type IV membrane protein</topology>
    </subcellularLocation>
</comment>
<comment type="subcellular location">
    <molecule>Isoform 4</molecule>
    <subcellularLocation>
        <location evidence="2">Endoplasmic reticulum membrane</location>
        <topology evidence="2">Single-pass type IV membrane protein</topology>
    </subcellularLocation>
    <text evidence="2">Do not localize at the mitochondrial membrane.</text>
</comment>
<comment type="alternative products">
    <event type="alternative splicing"/>
    <isoform>
        <id>Q3URD3-1</id>
        <name>1</name>
        <sequence type="displayed"/>
    </isoform>
    <isoform>
        <id>Q3URD3-2</id>
        <name>2</name>
        <sequence type="described" ref="VSP_021517 VSP_021518"/>
    </isoform>
    <isoform>
        <id>Q3URD3-3</id>
        <name>3</name>
        <sequence type="described" ref="VSP_021514"/>
    </isoform>
    <isoform>
        <id>Q3URD3-4</id>
        <name>4</name>
        <sequence type="described" ref="VSP_021514 VSP_021518"/>
    </isoform>
    <isoform>
        <id>Q3URD3-5</id>
        <name>5</name>
        <sequence type="described" ref="VSP_021515 VSP_021516"/>
    </isoform>
</comment>
<comment type="tissue specificity">
    <text evidence="6 7">Expressed in proliferating myoblasts and differentiated myotubes (at protein level). Expressed in myoblasts, cardiac and skeletal muscles.</text>
</comment>
<comment type="developmental stage">
    <text evidence="7">Expressed in atrial and ventricular chambers of the primitive heart at 9 dpc. Expressed in somites at 11 dpc. Expressed in atrial and ventricular chambers and interventricular and interatrial septum at 13 dpc. Expressed in myotubes between 13 and 15 dpc. Expressed in skeletal muscles at 18 dpc.</text>
</comment>
<comment type="domain">
    <text evidence="2">Alternative spliced transmembrane domains determine subcellular targeting. Isoforms 1, 2, 3 and 4 are targeted to endoplasmic reticulum membrane as well as mitochondrion membrane. Isoform 5 is not targeted to mitochondrion membrane but to endoplasmic reticulum membrane.</text>
</comment>
<comment type="similarity">
    <text evidence="14">Belongs to the SLMAP family.</text>
</comment>
<comment type="sequence caution" evidence="14">
    <conflict type="erroneous initiation">
        <sequence resource="EMBL-CDS" id="BAC98213"/>
    </conflict>
    <text>Extended N-terminus.</text>
</comment>
<comment type="sequence caution" evidence="14">
    <conflict type="erroneous initiation">
        <sequence resource="EMBL-CDS" id="BAE24755"/>
    </conflict>
    <text>Extended N-terminus.</text>
</comment>
<name>SLMAP_MOUSE</name>
<dbReference type="EMBL" id="AF304451">
    <property type="protein sequence ID" value="AAG41950.1"/>
    <property type="molecule type" value="mRNA"/>
</dbReference>
<dbReference type="EMBL" id="AK129403">
    <property type="protein sequence ID" value="BAC98213.1"/>
    <property type="status" value="ALT_INIT"/>
    <property type="molecule type" value="mRNA"/>
</dbReference>
<dbReference type="EMBL" id="AK141597">
    <property type="protein sequence ID" value="BAE24755.1"/>
    <property type="status" value="ALT_INIT"/>
    <property type="molecule type" value="mRNA"/>
</dbReference>
<dbReference type="EMBL" id="AK146685">
    <property type="protein sequence ID" value="BAE27359.1"/>
    <property type="molecule type" value="mRNA"/>
</dbReference>
<dbReference type="EMBL" id="AK164911">
    <property type="protein sequence ID" value="BAE37961.1"/>
    <property type="molecule type" value="mRNA"/>
</dbReference>
<dbReference type="EMBL" id="AK166396">
    <property type="protein sequence ID" value="BAE38752.1"/>
    <property type="molecule type" value="mRNA"/>
</dbReference>
<dbReference type="EMBL" id="BC021457">
    <property type="protein sequence ID" value="AAH21457.1"/>
    <property type="molecule type" value="mRNA"/>
</dbReference>
<dbReference type="CCDS" id="CCDS26880.1">
    <molecule id="Q3URD3-2"/>
</dbReference>
<dbReference type="CCDS" id="CCDS79284.1">
    <molecule id="Q3URD3-1"/>
</dbReference>
<dbReference type="RefSeq" id="NP_001297374.1">
    <molecule id="Q3URD3-1"/>
    <property type="nucleotide sequence ID" value="NM_001310445.1"/>
</dbReference>
<dbReference type="RefSeq" id="NP_001334423.1">
    <property type="nucleotide sequence ID" value="NM_001347494.1"/>
</dbReference>
<dbReference type="RefSeq" id="NP_114397.3">
    <molecule id="Q3URD3-2"/>
    <property type="nucleotide sequence ID" value="NM_032008.4"/>
</dbReference>
<dbReference type="RefSeq" id="XP_017171716.1">
    <property type="nucleotide sequence ID" value="XM_017316227.1"/>
</dbReference>
<dbReference type="RefSeq" id="XP_017171717.1">
    <property type="nucleotide sequence ID" value="XM_017316228.1"/>
</dbReference>
<dbReference type="SMR" id="Q3URD3"/>
<dbReference type="BioGRID" id="219996">
    <property type="interactions" value="26"/>
</dbReference>
<dbReference type="CORUM" id="Q3URD3"/>
<dbReference type="FunCoup" id="Q3URD3">
    <property type="interactions" value="1133"/>
</dbReference>
<dbReference type="IntAct" id="Q3URD3">
    <property type="interactions" value="2"/>
</dbReference>
<dbReference type="STRING" id="10090.ENSMUSP00000117816"/>
<dbReference type="GlyGen" id="Q3URD3">
    <property type="glycosylation" value="3 sites, 1 N-linked glycan (1 site), 1 O-linked glycan (2 sites)"/>
</dbReference>
<dbReference type="iPTMnet" id="Q3URD3"/>
<dbReference type="PhosphoSitePlus" id="Q3URD3"/>
<dbReference type="SwissPalm" id="Q3URD3"/>
<dbReference type="jPOST" id="Q3URD3"/>
<dbReference type="PaxDb" id="10090-ENSMUSP00000117816"/>
<dbReference type="PeptideAtlas" id="Q3URD3"/>
<dbReference type="ProteomicsDB" id="261422">
    <molecule id="Q3URD3-1"/>
</dbReference>
<dbReference type="ProteomicsDB" id="261423">
    <molecule id="Q3URD3-2"/>
</dbReference>
<dbReference type="ProteomicsDB" id="261424">
    <molecule id="Q3URD3-3"/>
</dbReference>
<dbReference type="ProteomicsDB" id="261425">
    <molecule id="Q3URD3-4"/>
</dbReference>
<dbReference type="ProteomicsDB" id="261426">
    <molecule id="Q3URD3-5"/>
</dbReference>
<dbReference type="Pumba" id="Q3URD3"/>
<dbReference type="Antibodypedia" id="1193">
    <property type="antibodies" value="75 antibodies from 19 providers"/>
</dbReference>
<dbReference type="DNASU" id="83997"/>
<dbReference type="Ensembl" id="ENSMUST00000038522.10">
    <molecule id="Q3URD3-2"/>
    <property type="protein sequence ID" value="ENSMUSP00000046956.4"/>
    <property type="gene ID" value="ENSMUSG00000021870.18"/>
</dbReference>
<dbReference type="Ensembl" id="ENSMUST00000102956.8">
    <molecule id="Q3URD3-2"/>
    <property type="protein sequence ID" value="ENSMUSP00000100021.2"/>
    <property type="gene ID" value="ENSMUSG00000021870.18"/>
</dbReference>
<dbReference type="Ensembl" id="ENSMUST00000139075.8">
    <molecule id="Q3URD3-1"/>
    <property type="protein sequence ID" value="ENSMUSP00000117816.2"/>
    <property type="gene ID" value="ENSMUSG00000021870.18"/>
</dbReference>
<dbReference type="GeneID" id="83997"/>
<dbReference type="KEGG" id="mmu:83997"/>
<dbReference type="UCSC" id="uc007ssq.1">
    <molecule id="Q3URD3-5"/>
    <property type="organism name" value="mouse"/>
</dbReference>
<dbReference type="UCSC" id="uc007ssr.1">
    <molecule id="Q3URD3-2"/>
    <property type="organism name" value="mouse"/>
</dbReference>
<dbReference type="UCSC" id="uc007sss.1">
    <molecule id="Q3URD3-1"/>
    <property type="organism name" value="mouse"/>
</dbReference>
<dbReference type="AGR" id="MGI:1933549"/>
<dbReference type="CTD" id="7871"/>
<dbReference type="MGI" id="MGI:1933549">
    <property type="gene designation" value="Slmap"/>
</dbReference>
<dbReference type="VEuPathDB" id="HostDB:ENSMUSG00000021870"/>
<dbReference type="eggNOG" id="KOG3872">
    <property type="taxonomic scope" value="Eukaryota"/>
</dbReference>
<dbReference type="GeneTree" id="ENSGT00940000157660"/>
<dbReference type="HOGENOM" id="CLU_359254_0_0_1"/>
<dbReference type="InParanoid" id="Q3URD3"/>
<dbReference type="OMA" id="XVIHAPL"/>
<dbReference type="OrthoDB" id="687730at2759"/>
<dbReference type="PhylomeDB" id="Q3URD3"/>
<dbReference type="TreeFam" id="TF318787"/>
<dbReference type="BioGRID-ORCS" id="83997">
    <property type="hits" value="8 hits in 81 CRISPR screens"/>
</dbReference>
<dbReference type="CD-CODE" id="01CA17F3">
    <property type="entry name" value="Centrosome"/>
</dbReference>
<dbReference type="ChiTaRS" id="Slmap">
    <property type="organism name" value="mouse"/>
</dbReference>
<dbReference type="PRO" id="PR:Q3URD3"/>
<dbReference type="Proteomes" id="UP000000589">
    <property type="component" value="Chromosome 14"/>
</dbReference>
<dbReference type="RNAct" id="Q3URD3">
    <property type="molecule type" value="protein"/>
</dbReference>
<dbReference type="Bgee" id="ENSMUSG00000021870">
    <property type="expression patterns" value="Expressed in aorta tunica media and 256 other cell types or tissues"/>
</dbReference>
<dbReference type="ExpressionAtlas" id="Q3URD3">
    <property type="expression patterns" value="baseline and differential"/>
</dbReference>
<dbReference type="GO" id="GO:0005813">
    <property type="term" value="C:centrosome"/>
    <property type="evidence" value="ECO:0007669"/>
    <property type="project" value="UniProtKB-SubCell"/>
</dbReference>
<dbReference type="GO" id="GO:0005789">
    <property type="term" value="C:endoplasmic reticulum membrane"/>
    <property type="evidence" value="ECO:0007669"/>
    <property type="project" value="UniProtKB-SubCell"/>
</dbReference>
<dbReference type="GO" id="GO:0005615">
    <property type="term" value="C:extracellular space"/>
    <property type="evidence" value="ECO:0007669"/>
    <property type="project" value="InterPro"/>
</dbReference>
<dbReference type="GO" id="GO:0090443">
    <property type="term" value="C:FAR/SIN/STRIPAK complex"/>
    <property type="evidence" value="ECO:0000250"/>
    <property type="project" value="UniProtKB"/>
</dbReference>
<dbReference type="GO" id="GO:0031430">
    <property type="term" value="C:M band"/>
    <property type="evidence" value="ECO:0007669"/>
    <property type="project" value="UniProtKB-SubCell"/>
</dbReference>
<dbReference type="GO" id="GO:0016020">
    <property type="term" value="C:membrane"/>
    <property type="evidence" value="ECO:0000314"/>
    <property type="project" value="MGI"/>
</dbReference>
<dbReference type="GO" id="GO:0031966">
    <property type="term" value="C:mitochondrial membrane"/>
    <property type="evidence" value="ECO:0007669"/>
    <property type="project" value="UniProtKB-SubCell"/>
</dbReference>
<dbReference type="GO" id="GO:0042383">
    <property type="term" value="C:sarcolemma"/>
    <property type="evidence" value="ECO:0007669"/>
    <property type="project" value="UniProtKB-SubCell"/>
</dbReference>
<dbReference type="GO" id="GO:0030018">
    <property type="term" value="C:Z disc"/>
    <property type="evidence" value="ECO:0007669"/>
    <property type="project" value="UniProtKB-SubCell"/>
</dbReference>
<dbReference type="GO" id="GO:0030674">
    <property type="term" value="F:protein-macromolecule adaptor activity"/>
    <property type="evidence" value="ECO:0000250"/>
    <property type="project" value="UniProtKB"/>
</dbReference>
<dbReference type="GO" id="GO:0035331">
    <property type="term" value="P:negative regulation of hippo signaling"/>
    <property type="evidence" value="ECO:0000250"/>
    <property type="project" value="UniProtKB"/>
</dbReference>
<dbReference type="CDD" id="cd21911">
    <property type="entry name" value="CC1_SLMAP"/>
    <property type="match status" value="1"/>
</dbReference>
<dbReference type="CDD" id="cd22679">
    <property type="entry name" value="FHA_SLMAP"/>
    <property type="match status" value="1"/>
</dbReference>
<dbReference type="FunFam" id="2.60.200.20:FF:000003">
    <property type="entry name" value="sarcolemmal membrane-associated protein isoform X2"/>
    <property type="match status" value="1"/>
</dbReference>
<dbReference type="Gene3D" id="2.60.200.20">
    <property type="match status" value="1"/>
</dbReference>
<dbReference type="InterPro" id="IPR051176">
    <property type="entry name" value="Cent_Immune-Sig_Mod"/>
</dbReference>
<dbReference type="InterPro" id="IPR000253">
    <property type="entry name" value="FHA_dom"/>
</dbReference>
<dbReference type="InterPro" id="IPR001363">
    <property type="entry name" value="Prot_inh_fetuin_CS"/>
</dbReference>
<dbReference type="InterPro" id="IPR008984">
    <property type="entry name" value="SMAD_FHA_dom_sf"/>
</dbReference>
<dbReference type="PANTHER" id="PTHR15715">
    <property type="entry name" value="CENTROSOMAL PROTEIN OF 170 KDA"/>
    <property type="match status" value="1"/>
</dbReference>
<dbReference type="PANTHER" id="PTHR15715:SF22">
    <property type="entry name" value="SARCOLEMMAL MEMBRANE-ASSOCIATED PROTEIN"/>
    <property type="match status" value="1"/>
</dbReference>
<dbReference type="Pfam" id="PF00498">
    <property type="entry name" value="FHA"/>
    <property type="match status" value="1"/>
</dbReference>
<dbReference type="SMART" id="SM00240">
    <property type="entry name" value="FHA"/>
    <property type="match status" value="1"/>
</dbReference>
<dbReference type="SUPFAM" id="SSF49879">
    <property type="entry name" value="SMAD/FHA domain"/>
    <property type="match status" value="1"/>
</dbReference>
<dbReference type="PROSITE" id="PS50006">
    <property type="entry name" value="FHA_DOMAIN"/>
    <property type="match status" value="1"/>
</dbReference>
<gene>
    <name type="primary">Slmap</name>
    <name type="synonym">Kiaa1601</name>
    <name type="synonym">Slap</name>
</gene>
<sequence>MPSALAIFTCRPNSHPFQERHVYLDEPIKIGRSVARCRPAQNNATFDCKVLSRNHALVWFDHKTSKFYLQDTKSSNGTFINSQRLSRGSEESPPCEILSGDIIQFGVDVTENTRKVTHGCIVSTIKLFLPDGMEARLRSDVIHAPLPSPVDKVAANTPSMYSQELFQLSQYLQEALHREQMLEQKLATLQRLLAITQEASDTSWQALIDEDRLLSRLEVMGNQLQACSKNQTEDSLRKELIALQEDKHSYETTAKESLRRVLQEKIEVVRKLSEVERSLSNTEDECTHLKEMNERTQEELRELANKYNGAVNEIKDLSDKLKVAEGKQEEIQQKGQAEKKELQTKIDEMEEKEQELQAKIEALQADNDFTNERLTALQVRLEHLQEKTLKECSSLGIQVDDFLPKINGSTEKEHLLSKSGGDCTFIHQFLECQKKLMVQGHLTKVVEESKLSKENQAKAKESDLSDTLSPSKEKSSDDTTDAQMDEQDLNEPLAKVSLLKDDLQGTQSETEAKQDIQHLRKELVEAQELARTSKQKCFELQALLEEERKAYRNQVEESAKQIQVLQVQLQKLHMDMENLQEEKDTEISSTRDKLLSAQDEILLLRQAAAEAVSERDTDFVSLQEELKKVRAELEGWRKAASEYENEIRSLQSSFQLRCQQCEDQQREEATRLQGELEKLKKEWDVLETECHSLKKENVLLSSELQRQEKELHNSQKQSFELTSDLSILQMTRKELEKQVGSLKEQHLRDAADLKTLLSKAENQAKDVQKEYEKTQTVLSELKLKFEMTEQEKQSITDELKQCKDNLKLLREKGNNKPWPWMPMLAALVAVTAMVLYVPGLARASP</sequence>
<accession>Q3URD3</accession>
<accession>Q3TLP0</accession>
<accession>Q3UIZ6</accession>
<accession>Q6ZPL8</accession>
<accession>Q8VC86</accession>
<accession>Q9EQ03</accession>
<reference key="1">
    <citation type="journal article" date="2000" name="J. Biol. Chem.">
        <title>Alternative splicing, expression, and genomic structure of the 3' region of the gene encoding the sarcolemmal-associated proteins (SLAPs) defines a novel class of coiled-coil tail-anchored membrane proteins.</title>
        <authorList>
            <person name="Wielowieyski P.A."/>
            <person name="Sevinc S."/>
            <person name="Guzzo R."/>
            <person name="Salih M."/>
            <person name="Wigle J.T."/>
            <person name="Tuana B.S."/>
        </authorList>
    </citation>
    <scope>NUCLEOTIDE SEQUENCE [MRNA] (ISOFORM 4)</scope>
    <scope>ALTERNATIVE SPLICING</scope>
    <scope>TISSUE SPECIFICITY</scope>
    <source>
        <strain>C57BL/6J</strain>
        <tissue>Spleen</tissue>
    </source>
</reference>
<reference key="2">
    <citation type="journal article" date="2003" name="DNA Res.">
        <title>Prediction of the coding sequences of mouse homologues of KIAA gene: III. The complete nucleotide sequences of 500 mouse KIAA-homologous cDNAs identified by screening of terminal sequences of cDNA clones randomly sampled from size-fractionated libraries.</title>
        <authorList>
            <person name="Okazaki N."/>
            <person name="Kikuno R."/>
            <person name="Ohara R."/>
            <person name="Inamoto S."/>
            <person name="Koseki H."/>
            <person name="Hiraoka S."/>
            <person name="Saga Y."/>
            <person name="Nagase T."/>
            <person name="Ohara O."/>
            <person name="Koga H."/>
        </authorList>
    </citation>
    <scope>NUCLEOTIDE SEQUENCE [LARGE SCALE MRNA] (ISOFORM 2)</scope>
    <source>
        <tissue>Embryonic tail</tissue>
    </source>
</reference>
<reference key="3">
    <citation type="journal article" date="2005" name="Science">
        <title>The transcriptional landscape of the mammalian genome.</title>
        <authorList>
            <person name="Carninci P."/>
            <person name="Kasukawa T."/>
            <person name="Katayama S."/>
            <person name="Gough J."/>
            <person name="Frith M.C."/>
            <person name="Maeda N."/>
            <person name="Oyama R."/>
            <person name="Ravasi T."/>
            <person name="Lenhard B."/>
            <person name="Wells C."/>
            <person name="Kodzius R."/>
            <person name="Shimokawa K."/>
            <person name="Bajic V.B."/>
            <person name="Brenner S.E."/>
            <person name="Batalov S."/>
            <person name="Forrest A.R."/>
            <person name="Zavolan M."/>
            <person name="Davis M.J."/>
            <person name="Wilming L.G."/>
            <person name="Aidinis V."/>
            <person name="Allen J.E."/>
            <person name="Ambesi-Impiombato A."/>
            <person name="Apweiler R."/>
            <person name="Aturaliya R.N."/>
            <person name="Bailey T.L."/>
            <person name="Bansal M."/>
            <person name="Baxter L."/>
            <person name="Beisel K.W."/>
            <person name="Bersano T."/>
            <person name="Bono H."/>
            <person name="Chalk A.M."/>
            <person name="Chiu K.P."/>
            <person name="Choudhary V."/>
            <person name="Christoffels A."/>
            <person name="Clutterbuck D.R."/>
            <person name="Crowe M.L."/>
            <person name="Dalla E."/>
            <person name="Dalrymple B.P."/>
            <person name="de Bono B."/>
            <person name="Della Gatta G."/>
            <person name="di Bernardo D."/>
            <person name="Down T."/>
            <person name="Engstrom P."/>
            <person name="Fagiolini M."/>
            <person name="Faulkner G."/>
            <person name="Fletcher C.F."/>
            <person name="Fukushima T."/>
            <person name="Furuno M."/>
            <person name="Futaki S."/>
            <person name="Gariboldi M."/>
            <person name="Georgii-Hemming P."/>
            <person name="Gingeras T.R."/>
            <person name="Gojobori T."/>
            <person name="Green R.E."/>
            <person name="Gustincich S."/>
            <person name="Harbers M."/>
            <person name="Hayashi Y."/>
            <person name="Hensch T.K."/>
            <person name="Hirokawa N."/>
            <person name="Hill D."/>
            <person name="Huminiecki L."/>
            <person name="Iacono M."/>
            <person name="Ikeo K."/>
            <person name="Iwama A."/>
            <person name="Ishikawa T."/>
            <person name="Jakt M."/>
            <person name="Kanapin A."/>
            <person name="Katoh M."/>
            <person name="Kawasawa Y."/>
            <person name="Kelso J."/>
            <person name="Kitamura H."/>
            <person name="Kitano H."/>
            <person name="Kollias G."/>
            <person name="Krishnan S.P."/>
            <person name="Kruger A."/>
            <person name="Kummerfeld S.K."/>
            <person name="Kurochkin I.V."/>
            <person name="Lareau L.F."/>
            <person name="Lazarevic D."/>
            <person name="Lipovich L."/>
            <person name="Liu J."/>
            <person name="Liuni S."/>
            <person name="McWilliam S."/>
            <person name="Madan Babu M."/>
            <person name="Madera M."/>
            <person name="Marchionni L."/>
            <person name="Matsuda H."/>
            <person name="Matsuzawa S."/>
            <person name="Miki H."/>
            <person name="Mignone F."/>
            <person name="Miyake S."/>
            <person name="Morris K."/>
            <person name="Mottagui-Tabar S."/>
            <person name="Mulder N."/>
            <person name="Nakano N."/>
            <person name="Nakauchi H."/>
            <person name="Ng P."/>
            <person name="Nilsson R."/>
            <person name="Nishiguchi S."/>
            <person name="Nishikawa S."/>
            <person name="Nori F."/>
            <person name="Ohara O."/>
            <person name="Okazaki Y."/>
            <person name="Orlando V."/>
            <person name="Pang K.C."/>
            <person name="Pavan W.J."/>
            <person name="Pavesi G."/>
            <person name="Pesole G."/>
            <person name="Petrovsky N."/>
            <person name="Piazza S."/>
            <person name="Reed J."/>
            <person name="Reid J.F."/>
            <person name="Ring B.Z."/>
            <person name="Ringwald M."/>
            <person name="Rost B."/>
            <person name="Ruan Y."/>
            <person name="Salzberg S.L."/>
            <person name="Sandelin A."/>
            <person name="Schneider C."/>
            <person name="Schoenbach C."/>
            <person name="Sekiguchi K."/>
            <person name="Semple C.A."/>
            <person name="Seno S."/>
            <person name="Sessa L."/>
            <person name="Sheng Y."/>
            <person name="Shibata Y."/>
            <person name="Shimada H."/>
            <person name="Shimada K."/>
            <person name="Silva D."/>
            <person name="Sinclair B."/>
            <person name="Sperling S."/>
            <person name="Stupka E."/>
            <person name="Sugiura K."/>
            <person name="Sultana R."/>
            <person name="Takenaka Y."/>
            <person name="Taki K."/>
            <person name="Tammoja K."/>
            <person name="Tan S.L."/>
            <person name="Tang S."/>
            <person name="Taylor M.S."/>
            <person name="Tegner J."/>
            <person name="Teichmann S.A."/>
            <person name="Ueda H.R."/>
            <person name="van Nimwegen E."/>
            <person name="Verardo R."/>
            <person name="Wei C.L."/>
            <person name="Yagi K."/>
            <person name="Yamanishi H."/>
            <person name="Zabarovsky E."/>
            <person name="Zhu S."/>
            <person name="Zimmer A."/>
            <person name="Hide W."/>
            <person name="Bult C."/>
            <person name="Grimmond S.M."/>
            <person name="Teasdale R.D."/>
            <person name="Liu E.T."/>
            <person name="Brusic V."/>
            <person name="Quackenbush J."/>
            <person name="Wahlestedt C."/>
            <person name="Mattick J.S."/>
            <person name="Hume D.A."/>
            <person name="Kai C."/>
            <person name="Sasaki D."/>
            <person name="Tomaru Y."/>
            <person name="Fukuda S."/>
            <person name="Kanamori-Katayama M."/>
            <person name="Suzuki M."/>
            <person name="Aoki J."/>
            <person name="Arakawa T."/>
            <person name="Iida J."/>
            <person name="Imamura K."/>
            <person name="Itoh M."/>
            <person name="Kato T."/>
            <person name="Kawaji H."/>
            <person name="Kawagashira N."/>
            <person name="Kawashima T."/>
            <person name="Kojima M."/>
            <person name="Kondo S."/>
            <person name="Konno H."/>
            <person name="Nakano K."/>
            <person name="Ninomiya N."/>
            <person name="Nishio T."/>
            <person name="Okada M."/>
            <person name="Plessy C."/>
            <person name="Shibata K."/>
            <person name="Shiraki T."/>
            <person name="Suzuki S."/>
            <person name="Tagami M."/>
            <person name="Waki K."/>
            <person name="Watahiki A."/>
            <person name="Okamura-Oho Y."/>
            <person name="Suzuki H."/>
            <person name="Kawai J."/>
            <person name="Hayashizaki Y."/>
        </authorList>
    </citation>
    <scope>NUCLEOTIDE SEQUENCE [LARGE SCALE MRNA] (ISOFORMS 1 AND 3)</scope>
    <source>
        <strain>C57BL/6J</strain>
        <tissue>Fetal heart</tissue>
        <tissue>Hippocampus</tissue>
        <tissue>Lung</tissue>
        <tissue>Mammary gland</tissue>
    </source>
</reference>
<reference key="4">
    <citation type="journal article" date="2004" name="Genome Res.">
        <title>The status, quality, and expansion of the NIH full-length cDNA project: the Mammalian Gene Collection (MGC).</title>
        <authorList>
            <consortium name="The MGC Project Team"/>
        </authorList>
    </citation>
    <scope>NUCLEOTIDE SEQUENCE [LARGE SCALE MRNA] (ISOFORM 5)</scope>
    <source>
        <strain>FVB/N</strain>
        <tissue>Kidney</tissue>
    </source>
</reference>
<reference key="5">
    <citation type="submission" date="2009-01" db="UniProtKB">
        <authorList>
            <person name="Lubec G."/>
            <person name="Sunyer B."/>
            <person name="Chen W.-Q."/>
        </authorList>
    </citation>
    <scope>PROTEIN SEQUENCE OF 744-759</scope>
    <scope>IDENTIFICATION BY MASS SPECTROMETRY</scope>
    <source>
        <strain>OF1</strain>
        <tissue>Hippocampus</tissue>
    </source>
</reference>
<reference key="6">
    <citation type="journal article" date="2005" name="Am. J. Physiol.">
        <title>Molecular properties of cardiac tail-anchored membrane protein SLMAP are consistent with structural role in arrangement of excitation-contraction coupling apparatus.</title>
        <authorList>
            <person name="Guzzo R.M."/>
            <person name="Salih M."/>
            <person name="Moore E.D."/>
            <person name="Tuana B.S."/>
        </authorList>
    </citation>
    <scope>INTERACTION WITH MYOSIN</scope>
    <scope>HOMODIMERIZATION</scope>
    <scope>SUBCELLULAR LOCATION</scope>
</reference>
<reference key="7">
    <citation type="journal article" date="2004" name="Biochem. J.">
        <title>Regulated expression and temporal induction of the tail-anchored sarcolemmal-membrane-associated protein is critical for myoblast fusion.</title>
        <authorList>
            <person name="Guzzo R.M."/>
            <person name="Wigle J."/>
            <person name="Salih M."/>
            <person name="Moore E.D."/>
            <person name="Tuana B.S."/>
        </authorList>
    </citation>
    <scope>FUNCTION</scope>
    <scope>HOMODIMERIZATION</scope>
    <scope>SUBCELLULAR LOCATION</scope>
    <scope>TISSUE SPECIFICITY</scope>
    <scope>DEVELOPMENTAL STAGE</scope>
</reference>
<reference key="8">
    <citation type="journal article" date="2004" name="J. Cell Sci.">
        <title>A novel isoform of sarcolemmal membrane-associated protein (SLMAP) is a component of the microtubule organizing centre.</title>
        <authorList>
            <person name="Guzzo R.M."/>
            <person name="Sevinc S."/>
            <person name="Salih M."/>
            <person name="Tuana B.S."/>
        </authorList>
    </citation>
    <scope>SUBCELLULAR LOCATION</scope>
    <scope>ALTERNATIVE SPLICING</scope>
</reference>
<reference key="9">
    <citation type="journal article" date="2010" name="Cell">
        <title>A tissue-specific atlas of mouse protein phosphorylation and expression.</title>
        <authorList>
            <person name="Huttlin E.L."/>
            <person name="Jedrychowski M.P."/>
            <person name="Elias J.E."/>
            <person name="Goswami T."/>
            <person name="Rad R."/>
            <person name="Beausoleil S.A."/>
            <person name="Villen J."/>
            <person name="Haas W."/>
            <person name="Sowa M.E."/>
            <person name="Gygi S.P."/>
        </authorList>
    </citation>
    <scope>IDENTIFICATION BY MASS SPECTROMETRY [LARGE SCALE ANALYSIS]</scope>
    <source>
        <tissue>Brain</tissue>
        <tissue>Brown adipose tissue</tissue>
        <tissue>Heart</tissue>
        <tissue>Kidney</tissue>
        <tissue>Liver</tissue>
        <tissue>Lung</tissue>
        <tissue>Spleen</tissue>
        <tissue>Testis</tissue>
    </source>
</reference>
<proteinExistence type="evidence at protein level"/>